<evidence type="ECO:0000255" key="1">
    <source>
        <dbReference type="HAMAP-Rule" id="MF_00354"/>
    </source>
</evidence>
<name>IDI2_BACLD</name>
<reference key="1">
    <citation type="journal article" date="2004" name="J. Mol. Microbiol. Biotechnol.">
        <title>The complete genome sequence of Bacillus licheniformis DSM13, an organism with great industrial potential.</title>
        <authorList>
            <person name="Veith B."/>
            <person name="Herzberg C."/>
            <person name="Steckel S."/>
            <person name="Feesche J."/>
            <person name="Maurer K.H."/>
            <person name="Ehrenreich P."/>
            <person name="Baeumer S."/>
            <person name="Henne A."/>
            <person name="Liesegang H."/>
            <person name="Merkl R."/>
            <person name="Ehrenreich A."/>
            <person name="Gottschalk G."/>
        </authorList>
    </citation>
    <scope>NUCLEOTIDE SEQUENCE [LARGE SCALE GENOMIC DNA]</scope>
    <source>
        <strain>ATCC 14580 / DSM 13 / JCM 2505 / CCUG 7422 / NBRC 12200 / NCIMB 9375 / NCTC 10341 / NRRL NRS-1264 / Gibson 46</strain>
    </source>
</reference>
<reference key="2">
    <citation type="journal article" date="2004" name="Genome Biol.">
        <title>Complete genome sequence of the industrial bacterium Bacillus licheniformis and comparisons with closely related Bacillus species.</title>
        <authorList>
            <person name="Rey M.W."/>
            <person name="Ramaiya P."/>
            <person name="Nelson B.A."/>
            <person name="Brody-Karpin S.D."/>
            <person name="Zaretsky E.J."/>
            <person name="Tang M."/>
            <person name="Lopez de Leon A."/>
            <person name="Xiang H."/>
            <person name="Gusti V."/>
            <person name="Clausen I.G."/>
            <person name="Olsen P.B."/>
            <person name="Rasmussen M.D."/>
            <person name="Andersen J.T."/>
            <person name="Joergensen P.L."/>
            <person name="Larsen T.S."/>
            <person name="Sorokin A."/>
            <person name="Bolotin A."/>
            <person name="Lapidus A."/>
            <person name="Galleron N."/>
            <person name="Ehrlich S.D."/>
            <person name="Berka R.M."/>
        </authorList>
    </citation>
    <scope>NUCLEOTIDE SEQUENCE [LARGE SCALE GENOMIC DNA]</scope>
    <source>
        <strain>ATCC 14580 / DSM 13 / JCM 2505 / CCUG 7422 / NBRC 12200 / NCIMB 9375 / NCTC 10341 / NRRL NRS-1264 / Gibson 46</strain>
    </source>
</reference>
<feature type="chain" id="PRO_0000229498" description="Isopentenyl-diphosphate delta-isomerase">
    <location>
        <begin position="1"/>
        <end position="349"/>
    </location>
</feature>
<feature type="binding site" evidence="1">
    <location>
        <begin position="6"/>
        <end position="7"/>
    </location>
    <ligand>
        <name>substrate</name>
    </ligand>
</feature>
<feature type="binding site" evidence="1">
    <location>
        <begin position="62"/>
        <end position="64"/>
    </location>
    <ligand>
        <name>FMN</name>
        <dbReference type="ChEBI" id="CHEBI:58210"/>
    </ligand>
</feature>
<feature type="binding site" evidence="1">
    <location>
        <position position="93"/>
    </location>
    <ligand>
        <name>FMN</name>
        <dbReference type="ChEBI" id="CHEBI:58210"/>
    </ligand>
</feature>
<feature type="binding site" evidence="1">
    <location>
        <position position="122"/>
    </location>
    <ligand>
        <name>FMN</name>
        <dbReference type="ChEBI" id="CHEBI:58210"/>
    </ligand>
</feature>
<feature type="binding site" evidence="1">
    <location>
        <position position="152"/>
    </location>
    <ligand>
        <name>substrate</name>
    </ligand>
</feature>
<feature type="binding site" evidence="1">
    <location>
        <position position="153"/>
    </location>
    <ligand>
        <name>Mg(2+)</name>
        <dbReference type="ChEBI" id="CHEBI:18420"/>
    </ligand>
</feature>
<feature type="binding site" evidence="1">
    <location>
        <position position="184"/>
    </location>
    <ligand>
        <name>FMN</name>
        <dbReference type="ChEBI" id="CHEBI:58210"/>
    </ligand>
</feature>
<feature type="binding site" evidence="1">
    <location>
        <position position="214"/>
    </location>
    <ligand>
        <name>FMN</name>
        <dbReference type="ChEBI" id="CHEBI:58210"/>
    </ligand>
</feature>
<feature type="binding site" evidence="1">
    <location>
        <begin position="258"/>
        <end position="259"/>
    </location>
    <ligand>
        <name>FMN</name>
        <dbReference type="ChEBI" id="CHEBI:58210"/>
    </ligand>
</feature>
<feature type="binding site" evidence="1">
    <location>
        <begin position="280"/>
        <end position="281"/>
    </location>
    <ligand>
        <name>FMN</name>
        <dbReference type="ChEBI" id="CHEBI:58210"/>
    </ligand>
</feature>
<accession>Q65I10</accession>
<accession>Q62TF8</accession>
<keyword id="KW-0963">Cytoplasm</keyword>
<keyword id="KW-0285">Flavoprotein</keyword>
<keyword id="KW-0288">FMN</keyword>
<keyword id="KW-0413">Isomerase</keyword>
<keyword id="KW-0414">Isoprene biosynthesis</keyword>
<keyword id="KW-0460">Magnesium</keyword>
<keyword id="KW-0479">Metal-binding</keyword>
<keyword id="KW-0521">NADP</keyword>
<keyword id="KW-1185">Reference proteome</keyword>
<sequence>MTRAKRKKEHIDHALSTGQKRQTGLDDITFVHVSLPETELSQVDTSTKIGELFLSSPIFINAMTGGGGKATFEINRALARAAAQTGIPVAVGSQMSALKDPDERPSYEIVRKENMKGLVFANLGSEATVEQAKRAVDMIEADMLQIHLNVIQEIVMPEGDRNFTGRLRRIEDICRSVSVPVAVKEVGFGMSRDTAARLFNVGVQAIDVGGFGGTNFSKIENLRRDKAVEFFDQWGISTAASLAEVSSISGDRPIIASGGIQDALDLAKSIALGASAAGMAGYFLKVLTASGEEALAAEIESLIEDFKRIMTVLGCRTIEQLKKAPLVIKGDTYHWLKARGVDPFVYSMR</sequence>
<gene>
    <name evidence="1" type="primary">fni</name>
    <name type="ordered locus">BLi02426</name>
    <name type="ordered locus">BL02217</name>
</gene>
<organism>
    <name type="scientific">Bacillus licheniformis (strain ATCC 14580 / DSM 13 / JCM 2505 / CCUG 7422 / NBRC 12200 / NCIMB 9375 / NCTC 10341 / NRRL NRS-1264 / Gibson 46)</name>
    <dbReference type="NCBI Taxonomy" id="279010"/>
    <lineage>
        <taxon>Bacteria</taxon>
        <taxon>Bacillati</taxon>
        <taxon>Bacillota</taxon>
        <taxon>Bacilli</taxon>
        <taxon>Bacillales</taxon>
        <taxon>Bacillaceae</taxon>
        <taxon>Bacillus</taxon>
    </lineage>
</organism>
<protein>
    <recommendedName>
        <fullName evidence="1">Isopentenyl-diphosphate delta-isomerase</fullName>
        <shortName evidence="1">IPP isomerase</shortName>
        <ecNumber evidence="1">5.3.3.2</ecNumber>
    </recommendedName>
    <alternativeName>
        <fullName evidence="1">Isopentenyl diphosphate:dimethylallyl diphosphate isomerase</fullName>
    </alternativeName>
    <alternativeName>
        <fullName evidence="1">Isopentenyl pyrophosphate isomerase</fullName>
    </alternativeName>
    <alternativeName>
        <fullName evidence="1">Type 2 isopentenyl diphosphate isomerase</fullName>
        <shortName evidence="1">IDI-2</shortName>
    </alternativeName>
</protein>
<dbReference type="EC" id="5.3.3.2" evidence="1"/>
<dbReference type="EMBL" id="AE017333">
    <property type="protein sequence ID" value="AAU41304.1"/>
    <property type="molecule type" value="Genomic_DNA"/>
</dbReference>
<dbReference type="EMBL" id="CP000002">
    <property type="protein sequence ID" value="AAU23951.2"/>
    <property type="molecule type" value="Genomic_DNA"/>
</dbReference>
<dbReference type="SMR" id="Q65I10"/>
<dbReference type="STRING" id="279010.BL02217"/>
<dbReference type="KEGG" id="bld:BLi02426"/>
<dbReference type="KEGG" id="bli:BL02217"/>
<dbReference type="eggNOG" id="COG1304">
    <property type="taxonomic scope" value="Bacteria"/>
</dbReference>
<dbReference type="HOGENOM" id="CLU_065515_0_0_9"/>
<dbReference type="Proteomes" id="UP000000606">
    <property type="component" value="Chromosome"/>
</dbReference>
<dbReference type="GO" id="GO:0005737">
    <property type="term" value="C:cytoplasm"/>
    <property type="evidence" value="ECO:0007669"/>
    <property type="project" value="UniProtKB-SubCell"/>
</dbReference>
<dbReference type="GO" id="GO:0010181">
    <property type="term" value="F:FMN binding"/>
    <property type="evidence" value="ECO:0007669"/>
    <property type="project" value="UniProtKB-UniRule"/>
</dbReference>
<dbReference type="GO" id="GO:0004452">
    <property type="term" value="F:isopentenyl-diphosphate delta-isomerase activity"/>
    <property type="evidence" value="ECO:0007669"/>
    <property type="project" value="UniProtKB-UniRule"/>
</dbReference>
<dbReference type="GO" id="GO:0000287">
    <property type="term" value="F:magnesium ion binding"/>
    <property type="evidence" value="ECO:0007669"/>
    <property type="project" value="UniProtKB-UniRule"/>
</dbReference>
<dbReference type="GO" id="GO:0070402">
    <property type="term" value="F:NADPH binding"/>
    <property type="evidence" value="ECO:0007669"/>
    <property type="project" value="UniProtKB-UniRule"/>
</dbReference>
<dbReference type="GO" id="GO:0016491">
    <property type="term" value="F:oxidoreductase activity"/>
    <property type="evidence" value="ECO:0007669"/>
    <property type="project" value="InterPro"/>
</dbReference>
<dbReference type="GO" id="GO:0008299">
    <property type="term" value="P:isoprenoid biosynthetic process"/>
    <property type="evidence" value="ECO:0007669"/>
    <property type="project" value="UniProtKB-UniRule"/>
</dbReference>
<dbReference type="CDD" id="cd02811">
    <property type="entry name" value="IDI-2_FMN"/>
    <property type="match status" value="1"/>
</dbReference>
<dbReference type="Gene3D" id="3.20.20.70">
    <property type="entry name" value="Aldolase class I"/>
    <property type="match status" value="1"/>
</dbReference>
<dbReference type="HAMAP" id="MF_00354">
    <property type="entry name" value="Idi_2"/>
    <property type="match status" value="1"/>
</dbReference>
<dbReference type="InterPro" id="IPR013785">
    <property type="entry name" value="Aldolase_TIM"/>
</dbReference>
<dbReference type="InterPro" id="IPR000262">
    <property type="entry name" value="FMN-dep_DH"/>
</dbReference>
<dbReference type="InterPro" id="IPR011179">
    <property type="entry name" value="IPdP_isomerase"/>
</dbReference>
<dbReference type="NCBIfam" id="TIGR02151">
    <property type="entry name" value="IPP_isom_2"/>
    <property type="match status" value="1"/>
</dbReference>
<dbReference type="PANTHER" id="PTHR43665">
    <property type="entry name" value="ISOPENTENYL-DIPHOSPHATE DELTA-ISOMERASE"/>
    <property type="match status" value="1"/>
</dbReference>
<dbReference type="PANTHER" id="PTHR43665:SF1">
    <property type="entry name" value="ISOPENTENYL-DIPHOSPHATE DELTA-ISOMERASE"/>
    <property type="match status" value="1"/>
</dbReference>
<dbReference type="Pfam" id="PF01070">
    <property type="entry name" value="FMN_dh"/>
    <property type="match status" value="1"/>
</dbReference>
<dbReference type="PIRSF" id="PIRSF003314">
    <property type="entry name" value="IPP_isomerase"/>
    <property type="match status" value="1"/>
</dbReference>
<dbReference type="SMART" id="SM01240">
    <property type="entry name" value="IMPDH"/>
    <property type="match status" value="1"/>
</dbReference>
<dbReference type="SUPFAM" id="SSF51395">
    <property type="entry name" value="FMN-linked oxidoreductases"/>
    <property type="match status" value="1"/>
</dbReference>
<proteinExistence type="inferred from homology"/>
<comment type="function">
    <text evidence="1">Involved in the biosynthesis of isoprenoids. Catalyzes the 1,3-allylic rearrangement of the homoallylic substrate isopentenyl (IPP) to its allylic isomer, dimethylallyl diphosphate (DMAPP).</text>
</comment>
<comment type="catalytic activity">
    <reaction evidence="1">
        <text>isopentenyl diphosphate = dimethylallyl diphosphate</text>
        <dbReference type="Rhea" id="RHEA:23284"/>
        <dbReference type="ChEBI" id="CHEBI:57623"/>
        <dbReference type="ChEBI" id="CHEBI:128769"/>
        <dbReference type="EC" id="5.3.3.2"/>
    </reaction>
</comment>
<comment type="cofactor">
    <cofactor evidence="1">
        <name>FMN</name>
        <dbReference type="ChEBI" id="CHEBI:58210"/>
    </cofactor>
</comment>
<comment type="cofactor">
    <cofactor evidence="1">
        <name>NADPH</name>
        <dbReference type="ChEBI" id="CHEBI:57783"/>
    </cofactor>
</comment>
<comment type="cofactor">
    <cofactor evidence="1">
        <name>Mg(2+)</name>
        <dbReference type="ChEBI" id="CHEBI:18420"/>
    </cofactor>
</comment>
<comment type="subunit">
    <text evidence="1">Homooctamer. Dimer of tetramers.</text>
</comment>
<comment type="subcellular location">
    <subcellularLocation>
        <location evidence="1">Cytoplasm</location>
    </subcellularLocation>
</comment>
<comment type="similarity">
    <text evidence="1">Belongs to the IPP isomerase type 2 family.</text>
</comment>